<feature type="chain" id="PRO_0000223604" description="Nuclear hormone receptor family member nhr-199">
    <location>
        <begin position="1"/>
        <end position="405"/>
    </location>
</feature>
<feature type="domain" description="NR LBD" evidence="2">
    <location>
        <begin position="126"/>
        <end position="376"/>
    </location>
</feature>
<feature type="DNA-binding region" description="Nuclear receptor" evidence="1">
    <location>
        <begin position="20"/>
        <end position="111"/>
    </location>
</feature>
<feature type="zinc finger region" description="NR C4-type" evidence="1">
    <location>
        <begin position="23"/>
        <end position="44"/>
    </location>
</feature>
<feature type="zinc finger region" description="NR C4-type" evidence="1">
    <location>
        <begin position="60"/>
        <end position="94"/>
    </location>
</feature>
<dbReference type="EMBL" id="Z83233">
    <property type="protein sequence ID" value="CAB05766.1"/>
    <property type="molecule type" value="Genomic_DNA"/>
</dbReference>
<dbReference type="PIR" id="T23370">
    <property type="entry name" value="T23370"/>
</dbReference>
<dbReference type="RefSeq" id="NP_506905.1">
    <property type="nucleotide sequence ID" value="NM_074504.1"/>
</dbReference>
<dbReference type="SMR" id="O17934"/>
<dbReference type="BioGRID" id="51764">
    <property type="interactions" value="4"/>
</dbReference>
<dbReference type="FunCoup" id="O17934">
    <property type="interactions" value="44"/>
</dbReference>
<dbReference type="PaxDb" id="6239-K06B4.10"/>
<dbReference type="EnsemblMetazoa" id="K06B4.10.1">
    <property type="protein sequence ID" value="K06B4.10.1"/>
    <property type="gene ID" value="WBGene00010604"/>
</dbReference>
<dbReference type="GeneID" id="187058"/>
<dbReference type="KEGG" id="cel:CELE_K06B4.10"/>
<dbReference type="UCSC" id="K06B4.10">
    <property type="organism name" value="c. elegans"/>
</dbReference>
<dbReference type="AGR" id="WB:WBGene00010604"/>
<dbReference type="CTD" id="187058"/>
<dbReference type="WormBase" id="K06B4.10">
    <property type="protein sequence ID" value="CE11800"/>
    <property type="gene ID" value="WBGene00010604"/>
    <property type="gene designation" value="nhr-199"/>
</dbReference>
<dbReference type="eggNOG" id="KOG3575">
    <property type="taxonomic scope" value="Eukaryota"/>
</dbReference>
<dbReference type="GeneTree" id="ENSGT00970000196534"/>
<dbReference type="HOGENOM" id="CLU_007368_1_1_1"/>
<dbReference type="InParanoid" id="O17934"/>
<dbReference type="OrthoDB" id="5830034at2759"/>
<dbReference type="PhylomeDB" id="O17934"/>
<dbReference type="PRO" id="PR:O17934"/>
<dbReference type="Proteomes" id="UP000001940">
    <property type="component" value="Chromosome V"/>
</dbReference>
<dbReference type="GO" id="GO:0005634">
    <property type="term" value="C:nucleus"/>
    <property type="evidence" value="ECO:0000318"/>
    <property type="project" value="GO_Central"/>
</dbReference>
<dbReference type="GO" id="GO:0003700">
    <property type="term" value="F:DNA-binding transcription factor activity"/>
    <property type="evidence" value="ECO:0000318"/>
    <property type="project" value="GO_Central"/>
</dbReference>
<dbReference type="GO" id="GO:0043565">
    <property type="term" value="F:sequence-specific DNA binding"/>
    <property type="evidence" value="ECO:0007669"/>
    <property type="project" value="InterPro"/>
</dbReference>
<dbReference type="GO" id="GO:0008270">
    <property type="term" value="F:zinc ion binding"/>
    <property type="evidence" value="ECO:0007669"/>
    <property type="project" value="UniProtKB-KW"/>
</dbReference>
<dbReference type="GO" id="GO:0006357">
    <property type="term" value="P:regulation of transcription by RNA polymerase II"/>
    <property type="evidence" value="ECO:0000318"/>
    <property type="project" value="GO_Central"/>
</dbReference>
<dbReference type="Gene3D" id="3.30.50.10">
    <property type="entry name" value="Erythroid Transcription Factor GATA-1, subunit A"/>
    <property type="match status" value="1"/>
</dbReference>
<dbReference type="Gene3D" id="1.10.565.10">
    <property type="entry name" value="Retinoid X Receptor"/>
    <property type="match status" value="1"/>
</dbReference>
<dbReference type="InterPro" id="IPR035500">
    <property type="entry name" value="NHR-like_dom_sf"/>
</dbReference>
<dbReference type="InterPro" id="IPR000536">
    <property type="entry name" value="Nucl_hrmn_rcpt_lig-bd"/>
</dbReference>
<dbReference type="InterPro" id="IPR001628">
    <property type="entry name" value="Znf_hrmn_rcpt"/>
</dbReference>
<dbReference type="InterPro" id="IPR013088">
    <property type="entry name" value="Znf_NHR/GATA"/>
</dbReference>
<dbReference type="PANTHER" id="PTHR46011:SF10">
    <property type="entry name" value="NUCLEAR HORMONE RECEPTOR FAMILY MEMBER NHR-199-RELATED"/>
    <property type="match status" value="1"/>
</dbReference>
<dbReference type="PANTHER" id="PTHR46011">
    <property type="entry name" value="NUCLEAR HORMONE RECEPTOR FAMILY MEMBER NHR-86-RELATED"/>
    <property type="match status" value="1"/>
</dbReference>
<dbReference type="Pfam" id="PF00104">
    <property type="entry name" value="Hormone_recep"/>
    <property type="match status" value="1"/>
</dbReference>
<dbReference type="Pfam" id="PF00105">
    <property type="entry name" value="zf-C4"/>
    <property type="match status" value="2"/>
</dbReference>
<dbReference type="PRINTS" id="PR00047">
    <property type="entry name" value="STROIDFINGER"/>
</dbReference>
<dbReference type="SMART" id="SM00430">
    <property type="entry name" value="HOLI"/>
    <property type="match status" value="1"/>
</dbReference>
<dbReference type="SMART" id="SM00399">
    <property type="entry name" value="ZnF_C4"/>
    <property type="match status" value="1"/>
</dbReference>
<dbReference type="SUPFAM" id="SSF57716">
    <property type="entry name" value="Glucocorticoid receptor-like (DNA-binding domain)"/>
    <property type="match status" value="1"/>
</dbReference>
<dbReference type="SUPFAM" id="SSF48508">
    <property type="entry name" value="Nuclear receptor ligand-binding domain"/>
    <property type="match status" value="1"/>
</dbReference>
<dbReference type="PROSITE" id="PS51843">
    <property type="entry name" value="NR_LBD"/>
    <property type="match status" value="1"/>
</dbReference>
<dbReference type="PROSITE" id="PS51030">
    <property type="entry name" value="NUCLEAR_REC_DBD_2"/>
    <property type="match status" value="1"/>
</dbReference>
<gene>
    <name type="primary">nhr-199</name>
    <name type="ORF">K06B4.10</name>
</gene>
<comment type="function">
    <text>Orphan nuclear receptor.</text>
</comment>
<comment type="subcellular location">
    <subcellularLocation>
        <location evidence="1">Nucleus</location>
    </subcellularLocation>
</comment>
<comment type="similarity">
    <text evidence="3">Belongs to the nuclear hormone receptor family.</text>
</comment>
<sequence>MFTLARVLNNIGSASSNEPIPYCLICSEVADGNHFGVAAACRACAAFFRRTVQHNKIHECGRNGQCFFLSCKFLLVGFQISPLSSDARSMCKACRYGKCLEMGMQRSSVQQRREQLGKRLNISDDRGKPVLNKLRRAYEMLILNRKHVHNRRENQAPRAIGFNELPIVFQNESTSIYQFLWEAFPEYSMLLPDTKLAFFKNFFLSFCLFESSFNGCSAKQKNVMLIPSGDYIDLAHSESFFTNDHQTFTERDNIEILAQRLKLIQSSITVPLSAENVDIYEFLALAGIILLESDSESEADFQEEAVKIKSNIIKDLLFHYQCINIYDDAAMRLGAVLSILPSIQVCCSRSNNFLIINSKDVSESQSPFSRIHGNQKYAQFVRSSQESLRHVLANFIKFICKFVSI</sequence>
<proteinExistence type="inferred from homology"/>
<organism>
    <name type="scientific">Caenorhabditis elegans</name>
    <dbReference type="NCBI Taxonomy" id="6239"/>
    <lineage>
        <taxon>Eukaryota</taxon>
        <taxon>Metazoa</taxon>
        <taxon>Ecdysozoa</taxon>
        <taxon>Nematoda</taxon>
        <taxon>Chromadorea</taxon>
        <taxon>Rhabditida</taxon>
        <taxon>Rhabditina</taxon>
        <taxon>Rhabditomorpha</taxon>
        <taxon>Rhabditoidea</taxon>
        <taxon>Rhabditidae</taxon>
        <taxon>Peloderinae</taxon>
        <taxon>Caenorhabditis</taxon>
    </lineage>
</organism>
<keyword id="KW-0238">DNA-binding</keyword>
<keyword id="KW-0479">Metal-binding</keyword>
<keyword id="KW-0539">Nucleus</keyword>
<keyword id="KW-0675">Receptor</keyword>
<keyword id="KW-1185">Reference proteome</keyword>
<keyword id="KW-0804">Transcription</keyword>
<keyword id="KW-0805">Transcription regulation</keyword>
<keyword id="KW-0862">Zinc</keyword>
<keyword id="KW-0863">Zinc-finger</keyword>
<protein>
    <recommendedName>
        <fullName>Nuclear hormone receptor family member nhr-199</fullName>
    </recommendedName>
</protein>
<evidence type="ECO:0000255" key="1">
    <source>
        <dbReference type="PROSITE-ProRule" id="PRU00407"/>
    </source>
</evidence>
<evidence type="ECO:0000255" key="2">
    <source>
        <dbReference type="PROSITE-ProRule" id="PRU01189"/>
    </source>
</evidence>
<evidence type="ECO:0000305" key="3"/>
<reference key="1">
    <citation type="journal article" date="1998" name="Science">
        <title>Genome sequence of the nematode C. elegans: a platform for investigating biology.</title>
        <authorList>
            <consortium name="The C. elegans sequencing consortium"/>
        </authorList>
    </citation>
    <scope>NUCLEOTIDE SEQUENCE [LARGE SCALE GENOMIC DNA]</scope>
    <source>
        <strain>Bristol N2</strain>
    </source>
</reference>
<name>NH199_CAEEL</name>
<accession>O17934</accession>